<dbReference type="EC" id="2.3.1.9" evidence="6 8"/>
<dbReference type="EMBL" id="L20428">
    <property type="protein sequence ID" value="AAA62378.1"/>
    <property type="molecule type" value="Genomic_DNA"/>
</dbReference>
<dbReference type="EMBL" id="U36624">
    <property type="protein sequence ID" value="AAB68159.1"/>
    <property type="molecule type" value="Genomic_DNA"/>
</dbReference>
<dbReference type="EMBL" id="BK006949">
    <property type="protein sequence ID" value="DAA11401.1"/>
    <property type="molecule type" value="Genomic_DNA"/>
</dbReference>
<dbReference type="PIR" id="A55654">
    <property type="entry name" value="A55654"/>
</dbReference>
<dbReference type="RefSeq" id="NP_015297.1">
    <property type="nucleotide sequence ID" value="NM_001183842.1"/>
</dbReference>
<dbReference type="PDB" id="5XYJ">
    <property type="method" value="X-ray"/>
    <property type="resolution" value="1.93 A"/>
    <property type="chains" value="A/B=1-398"/>
</dbReference>
<dbReference type="PDB" id="5XZ5">
    <property type="method" value="X-ray"/>
    <property type="resolution" value="2.20 A"/>
    <property type="chains" value="A/B=1-398"/>
</dbReference>
<dbReference type="PDBsum" id="5XYJ"/>
<dbReference type="PDBsum" id="5XZ5"/>
<dbReference type="SMR" id="P41338"/>
<dbReference type="BioGRID" id="36150">
    <property type="interactions" value="287"/>
</dbReference>
<dbReference type="DIP" id="DIP-6396N"/>
<dbReference type="FunCoup" id="P41338">
    <property type="interactions" value="749"/>
</dbReference>
<dbReference type="IntAct" id="P41338">
    <property type="interactions" value="20"/>
</dbReference>
<dbReference type="MINT" id="P41338"/>
<dbReference type="STRING" id="4932.YPL028W"/>
<dbReference type="iPTMnet" id="P41338"/>
<dbReference type="PaxDb" id="4932-YPL028W"/>
<dbReference type="PeptideAtlas" id="P41338"/>
<dbReference type="EnsemblFungi" id="YPL028W_mRNA">
    <property type="protein sequence ID" value="YPL028W"/>
    <property type="gene ID" value="YPL028W"/>
</dbReference>
<dbReference type="GeneID" id="856079"/>
<dbReference type="KEGG" id="sce:YPL028W"/>
<dbReference type="AGR" id="SGD:S000005949"/>
<dbReference type="SGD" id="S000005949">
    <property type="gene designation" value="ERG10"/>
</dbReference>
<dbReference type="VEuPathDB" id="FungiDB:YPL028W"/>
<dbReference type="eggNOG" id="KOG1390">
    <property type="taxonomic scope" value="Eukaryota"/>
</dbReference>
<dbReference type="GeneTree" id="ENSGT01030000234626"/>
<dbReference type="HOGENOM" id="CLU_031026_0_1_1"/>
<dbReference type="InParanoid" id="P41338"/>
<dbReference type="OMA" id="ICPSIAI"/>
<dbReference type="OrthoDB" id="5404651at2759"/>
<dbReference type="BioCyc" id="MetaCyc:YPL028W-MONOMER"/>
<dbReference type="BioCyc" id="YEAST:YPL028W-MONOMER"/>
<dbReference type="BRENDA" id="2.3.1.9">
    <property type="organism ID" value="984"/>
</dbReference>
<dbReference type="Reactome" id="R-SCE-191273">
    <property type="pathway name" value="Cholesterol biosynthesis"/>
</dbReference>
<dbReference type="UniPathway" id="UPA00058">
    <property type="reaction ID" value="UER00101"/>
</dbReference>
<dbReference type="BioGRID-ORCS" id="856079">
    <property type="hits" value="9 hits in 10 CRISPR screens"/>
</dbReference>
<dbReference type="PRO" id="PR:P41338"/>
<dbReference type="Proteomes" id="UP000002311">
    <property type="component" value="Chromosome XVI"/>
</dbReference>
<dbReference type="RNAct" id="P41338">
    <property type="molecule type" value="protein"/>
</dbReference>
<dbReference type="GO" id="GO:0005737">
    <property type="term" value="C:cytoplasm"/>
    <property type="evidence" value="ECO:0000314"/>
    <property type="project" value="SGD"/>
</dbReference>
<dbReference type="GO" id="GO:0005829">
    <property type="term" value="C:cytosol"/>
    <property type="evidence" value="ECO:0007669"/>
    <property type="project" value="UniProtKB-SubCell"/>
</dbReference>
<dbReference type="GO" id="GO:0005739">
    <property type="term" value="C:mitochondrion"/>
    <property type="evidence" value="ECO:0000318"/>
    <property type="project" value="GO_Central"/>
</dbReference>
<dbReference type="GO" id="GO:0005634">
    <property type="term" value="C:nucleus"/>
    <property type="evidence" value="ECO:0007005"/>
    <property type="project" value="SGD"/>
</dbReference>
<dbReference type="GO" id="GO:0005773">
    <property type="term" value="C:vacuole"/>
    <property type="evidence" value="ECO:0000303"/>
    <property type="project" value="UniProt"/>
</dbReference>
<dbReference type="GO" id="GO:0003985">
    <property type="term" value="F:acetyl-CoA C-acetyltransferase activity"/>
    <property type="evidence" value="ECO:0000314"/>
    <property type="project" value="UniProt"/>
</dbReference>
<dbReference type="GO" id="GO:0046872">
    <property type="term" value="F:metal ion binding"/>
    <property type="evidence" value="ECO:0007669"/>
    <property type="project" value="UniProtKB-KW"/>
</dbReference>
<dbReference type="GO" id="GO:0006696">
    <property type="term" value="P:ergosterol biosynthetic process"/>
    <property type="evidence" value="ECO:0000314"/>
    <property type="project" value="UniProt"/>
</dbReference>
<dbReference type="CDD" id="cd00751">
    <property type="entry name" value="thiolase"/>
    <property type="match status" value="1"/>
</dbReference>
<dbReference type="FunFam" id="3.40.47.10:FF:000007">
    <property type="entry name" value="acetyl-CoA acetyltransferase, mitochondrial"/>
    <property type="match status" value="1"/>
</dbReference>
<dbReference type="Gene3D" id="3.40.47.10">
    <property type="match status" value="1"/>
</dbReference>
<dbReference type="InterPro" id="IPR002155">
    <property type="entry name" value="Thiolase"/>
</dbReference>
<dbReference type="InterPro" id="IPR016039">
    <property type="entry name" value="Thiolase-like"/>
</dbReference>
<dbReference type="InterPro" id="IPR020615">
    <property type="entry name" value="Thiolase_acyl_enz_int_AS"/>
</dbReference>
<dbReference type="InterPro" id="IPR020610">
    <property type="entry name" value="Thiolase_AS"/>
</dbReference>
<dbReference type="InterPro" id="IPR020617">
    <property type="entry name" value="Thiolase_C"/>
</dbReference>
<dbReference type="InterPro" id="IPR020613">
    <property type="entry name" value="Thiolase_CS"/>
</dbReference>
<dbReference type="InterPro" id="IPR020616">
    <property type="entry name" value="Thiolase_N"/>
</dbReference>
<dbReference type="NCBIfam" id="TIGR01930">
    <property type="entry name" value="AcCoA-C-Actrans"/>
    <property type="match status" value="1"/>
</dbReference>
<dbReference type="PANTHER" id="PTHR18919:SF165">
    <property type="entry name" value="ACETYL-COA ACETYLTRANSFERASE"/>
    <property type="match status" value="1"/>
</dbReference>
<dbReference type="PANTHER" id="PTHR18919">
    <property type="entry name" value="ACETYL-COA C-ACYLTRANSFERASE"/>
    <property type="match status" value="1"/>
</dbReference>
<dbReference type="Pfam" id="PF02803">
    <property type="entry name" value="Thiolase_C"/>
    <property type="match status" value="1"/>
</dbReference>
<dbReference type="Pfam" id="PF00108">
    <property type="entry name" value="Thiolase_N"/>
    <property type="match status" value="1"/>
</dbReference>
<dbReference type="PIRSF" id="PIRSF000429">
    <property type="entry name" value="Ac-CoA_Ac_transf"/>
    <property type="match status" value="1"/>
</dbReference>
<dbReference type="SUPFAM" id="SSF53901">
    <property type="entry name" value="Thiolase-like"/>
    <property type="match status" value="2"/>
</dbReference>
<dbReference type="PROSITE" id="PS00098">
    <property type="entry name" value="THIOLASE_1"/>
    <property type="match status" value="1"/>
</dbReference>
<dbReference type="PROSITE" id="PS00737">
    <property type="entry name" value="THIOLASE_2"/>
    <property type="match status" value="1"/>
</dbReference>
<dbReference type="PROSITE" id="PS00099">
    <property type="entry name" value="THIOLASE_3"/>
    <property type="match status" value="1"/>
</dbReference>
<gene>
    <name evidence="12" type="primary">ERG10</name>
    <name type="ordered locus">YPL028W</name>
    <name type="ORF">LPB3</name>
</gene>
<reference key="1">
    <citation type="journal article" date="1994" name="J. Biol. Chem.">
        <title>ERG10 from Saccharomyces cerevisiae encodes acetoacetyl-CoA thiolase.</title>
        <authorList>
            <person name="Hiser L.M."/>
            <person name="Basson M.E."/>
            <person name="Rine J."/>
        </authorList>
    </citation>
    <scope>NUCLEOTIDE SEQUENCE [GENOMIC DNA]</scope>
    <scope>FUNCTION</scope>
    <scope>CATALYTIC ACTIVITY</scope>
    <scope>PATHWAY</scope>
</reference>
<reference key="2">
    <citation type="journal article" date="1997" name="Nature">
        <title>The nucleotide sequence of Saccharomyces cerevisiae chromosome XVI.</title>
        <authorList>
            <person name="Bussey H."/>
            <person name="Storms R.K."/>
            <person name="Ahmed A."/>
            <person name="Albermann K."/>
            <person name="Allen E."/>
            <person name="Ansorge W."/>
            <person name="Araujo R."/>
            <person name="Aparicio A."/>
            <person name="Barrell B.G."/>
            <person name="Badcock K."/>
            <person name="Benes V."/>
            <person name="Botstein D."/>
            <person name="Bowman S."/>
            <person name="Brueckner M."/>
            <person name="Carpenter J."/>
            <person name="Cherry J.M."/>
            <person name="Chung E."/>
            <person name="Churcher C.M."/>
            <person name="Coster F."/>
            <person name="Davis K."/>
            <person name="Davis R.W."/>
            <person name="Dietrich F.S."/>
            <person name="Delius H."/>
            <person name="DiPaolo T."/>
            <person name="Dubois E."/>
            <person name="Duesterhoeft A."/>
            <person name="Duncan M."/>
            <person name="Floeth M."/>
            <person name="Fortin N."/>
            <person name="Friesen J.D."/>
            <person name="Fritz C."/>
            <person name="Goffeau A."/>
            <person name="Hall J."/>
            <person name="Hebling U."/>
            <person name="Heumann K."/>
            <person name="Hilbert H."/>
            <person name="Hillier L.W."/>
            <person name="Hunicke-Smith S."/>
            <person name="Hyman R.W."/>
            <person name="Johnston M."/>
            <person name="Kalman S."/>
            <person name="Kleine K."/>
            <person name="Komp C."/>
            <person name="Kurdi O."/>
            <person name="Lashkari D."/>
            <person name="Lew H."/>
            <person name="Lin A."/>
            <person name="Lin D."/>
            <person name="Louis E.J."/>
            <person name="Marathe R."/>
            <person name="Messenguy F."/>
            <person name="Mewes H.-W."/>
            <person name="Mirtipati S."/>
            <person name="Moestl D."/>
            <person name="Mueller-Auer S."/>
            <person name="Namath A."/>
            <person name="Nentwich U."/>
            <person name="Oefner P."/>
            <person name="Pearson D."/>
            <person name="Petel F.X."/>
            <person name="Pohl T.M."/>
            <person name="Purnelle B."/>
            <person name="Rajandream M.A."/>
            <person name="Rechmann S."/>
            <person name="Rieger M."/>
            <person name="Riles L."/>
            <person name="Roberts D."/>
            <person name="Schaefer M."/>
            <person name="Scharfe M."/>
            <person name="Scherens B."/>
            <person name="Schramm S."/>
            <person name="Schroeder M."/>
            <person name="Sdicu A.-M."/>
            <person name="Tettelin H."/>
            <person name="Urrestarazu L.A."/>
            <person name="Ushinsky S."/>
            <person name="Vierendeels F."/>
            <person name="Vissers S."/>
            <person name="Voss H."/>
            <person name="Walsh S.V."/>
            <person name="Wambutt R."/>
            <person name="Wang Y."/>
            <person name="Wedler E."/>
            <person name="Wedler H."/>
            <person name="Winnett E."/>
            <person name="Zhong W.-W."/>
            <person name="Zollner A."/>
            <person name="Vo D.H."/>
            <person name="Hani J."/>
        </authorList>
    </citation>
    <scope>NUCLEOTIDE SEQUENCE [LARGE SCALE GENOMIC DNA]</scope>
    <source>
        <strain>ATCC 204508 / S288c</strain>
    </source>
</reference>
<reference key="3">
    <citation type="journal article" date="2014" name="G3 (Bethesda)">
        <title>The reference genome sequence of Saccharomyces cerevisiae: Then and now.</title>
        <authorList>
            <person name="Engel S.R."/>
            <person name="Dietrich F.S."/>
            <person name="Fisk D.G."/>
            <person name="Binkley G."/>
            <person name="Balakrishnan R."/>
            <person name="Costanzo M.C."/>
            <person name="Dwight S.S."/>
            <person name="Hitz B.C."/>
            <person name="Karra K."/>
            <person name="Nash R.S."/>
            <person name="Weng S."/>
            <person name="Wong E.D."/>
            <person name="Lloyd P."/>
            <person name="Skrzypek M.S."/>
            <person name="Miyasato S.R."/>
            <person name="Simison M."/>
            <person name="Cherry J.M."/>
        </authorList>
    </citation>
    <scope>GENOME REANNOTATION</scope>
    <source>
        <strain>ATCC 204508 / S288c</strain>
    </source>
</reference>
<reference key="4">
    <citation type="submission" date="2005-06" db="UniProtKB">
        <authorList>
            <person name="Bienvenut W.V."/>
            <person name="Peters C."/>
        </authorList>
    </citation>
    <scope>PROTEIN SEQUENCE OF 2-36 AND 137-148</scope>
    <scope>CLEAVAGE OF INITIATOR METHIONINE</scope>
    <scope>ACETYLATION AT SER-2</scope>
    <scope>IDENTIFICATION BY MASS SPECTROMETRY</scope>
</reference>
<reference key="5">
    <citation type="journal article" date="1971" name="J. Biol. Chem.">
        <title>Two forms of acetoacetyl coenzyme A thiolase in yeast. I. Separation and properties.</title>
        <authorList>
            <person name="Kornblatt J.A."/>
            <person name="Rudney H."/>
        </authorList>
    </citation>
    <scope>FUNCTION</scope>
    <scope>CATALYTIC ACTIVITY</scope>
    <scope>BIOPHYSICOCHEMICAL PROPERTIES</scope>
</reference>
<reference key="6">
    <citation type="journal article" date="1971" name="J. Biol. Chem.">
        <title>Two forms of acetoacetyl coenzyme A thiolase in yeast. II. Intracellular location and relationship to growth.</title>
        <authorList>
            <person name="Kornblatt J.A."/>
            <person name="Rudney H."/>
        </authorList>
    </citation>
    <scope>SUBCELLULAR LOCATION</scope>
</reference>
<reference key="7">
    <citation type="journal article" date="1996" name="Mol. Cell. Biol.">
        <title>Transcriptional regulation of a sterol-biosynthetic enzyme by sterol levels in Saccharomyces cerevisiae.</title>
        <authorList>
            <person name="Dimster-Denk D."/>
            <person name="Rine J."/>
        </authorList>
    </citation>
    <scope>INDUCTION</scope>
</reference>
<reference key="8">
    <citation type="journal article" date="2002" name="Appl. Environ. Microbiol.">
        <title>Gene expression analysis of cold and freeze stress in Baker's yeast.</title>
        <authorList>
            <person name="Rodriguez-Vargas S."/>
            <person name="Estruch F."/>
            <person name="Randez-Gil F."/>
        </authorList>
    </citation>
    <scope>INDUCTION</scope>
    <scope>FUNCTION</scope>
    <scope>DISRUPTION PHENOTYPE</scope>
</reference>
<reference key="9">
    <citation type="journal article" date="2003" name="Nature">
        <title>Global analysis of protein expression in yeast.</title>
        <authorList>
            <person name="Ghaemmaghami S."/>
            <person name="Huh W.-K."/>
            <person name="Bower K."/>
            <person name="Howson R.W."/>
            <person name="Belle A."/>
            <person name="Dephoure N."/>
            <person name="O'Shea E.K."/>
            <person name="Weissman J.S."/>
        </authorList>
    </citation>
    <scope>LEVEL OF PROTEIN EXPRESSION [LARGE SCALE ANALYSIS]</scope>
</reference>
<reference key="10">
    <citation type="journal article" date="2012" name="Proc. Natl. Acad. Sci. U.S.A.">
        <title>N-terminal acetylome analyses and functional insights of the N-terminal acetyltransferase NatB.</title>
        <authorList>
            <person name="Van Damme P."/>
            <person name="Lasa M."/>
            <person name="Polevoda B."/>
            <person name="Gazquez C."/>
            <person name="Elosegui-Artola A."/>
            <person name="Kim D.S."/>
            <person name="De Juan-Pardo E."/>
            <person name="Demeyer K."/>
            <person name="Hole K."/>
            <person name="Larrea E."/>
            <person name="Timmerman E."/>
            <person name="Prieto J."/>
            <person name="Arnesen T."/>
            <person name="Sherman F."/>
            <person name="Gevaert K."/>
            <person name="Aldabe R."/>
        </authorList>
    </citation>
    <scope>ACETYLATION [LARGE SCALE ANALYSIS] AT SER-2</scope>
    <scope>CLEAVAGE OF INITIATOR METHIONINE [LARGE SCALE ANALYSIS]</scope>
    <scope>IDENTIFICATION BY MASS SPECTROMETRY [LARGE SCALE ANALYSIS]</scope>
</reference>
<reference key="11">
    <citation type="journal article" date="2020" name="Genes (Basel)">
        <title>Regulation of ergosterol biosynthesis in Saccharomyces cerevisiae.</title>
        <authorList>
            <person name="Jorda T."/>
            <person name="Puig S."/>
        </authorList>
    </citation>
    <scope>REVIEW ON ERGOSTEROL BIOSYNTHESIS</scope>
</reference>
<reference evidence="14 15" key="12">
    <citation type="journal article" date="2018" name="Acta Crystallogr. F Struct. Biol. Commun.">
        <title>Crystal structure of cytoplasmic acetoacetyl-CoA thiolase from Saccharomyces cerevisiae.</title>
        <authorList>
            <person name="Zhou P."/>
            <person name="Zhu Z."/>
            <person name="Hidayatullah Khan M."/>
            <person name="Zheng P."/>
            <person name="Teng M."/>
            <person name="Niu L."/>
        </authorList>
    </citation>
    <scope>X-RAY CRYSTALLOGRAPHY (1.93 ANGSTROMS)</scope>
    <scope>SUBUNIT</scope>
</reference>
<evidence type="ECO:0000250" key="1">
    <source>
        <dbReference type="UniProtKB" id="P24752"/>
    </source>
</evidence>
<evidence type="ECO:0000255" key="2">
    <source>
        <dbReference type="PROSITE-ProRule" id="PRU10020"/>
    </source>
</evidence>
<evidence type="ECO:0000269" key="3">
    <source>
    </source>
</evidence>
<evidence type="ECO:0000269" key="4">
    <source>
    </source>
</evidence>
<evidence type="ECO:0000269" key="5">
    <source>
    </source>
</evidence>
<evidence type="ECO:0000269" key="6">
    <source>
    </source>
</evidence>
<evidence type="ECO:0000269" key="7">
    <source>
    </source>
</evidence>
<evidence type="ECO:0000269" key="8">
    <source>
    </source>
</evidence>
<evidence type="ECO:0000269" key="9">
    <source>
    </source>
</evidence>
<evidence type="ECO:0000269" key="10">
    <source ref="4"/>
</evidence>
<evidence type="ECO:0000303" key="11">
    <source>
    </source>
</evidence>
<evidence type="ECO:0000303" key="12">
    <source>
    </source>
</evidence>
<evidence type="ECO:0000305" key="13"/>
<evidence type="ECO:0007744" key="14">
    <source>
        <dbReference type="PDB" id="5XYJ"/>
    </source>
</evidence>
<evidence type="ECO:0007744" key="15">
    <source>
        <dbReference type="PDB" id="5XZ5"/>
    </source>
</evidence>
<evidence type="ECO:0007744" key="16">
    <source>
    </source>
</evidence>
<evidence type="ECO:0007829" key="17">
    <source>
        <dbReference type="PDB" id="5XYJ"/>
    </source>
</evidence>
<organism>
    <name type="scientific">Saccharomyces cerevisiae (strain ATCC 204508 / S288c)</name>
    <name type="common">Baker's yeast</name>
    <dbReference type="NCBI Taxonomy" id="559292"/>
    <lineage>
        <taxon>Eukaryota</taxon>
        <taxon>Fungi</taxon>
        <taxon>Dikarya</taxon>
        <taxon>Ascomycota</taxon>
        <taxon>Saccharomycotina</taxon>
        <taxon>Saccharomycetes</taxon>
        <taxon>Saccharomycetales</taxon>
        <taxon>Saccharomycetaceae</taxon>
        <taxon>Saccharomyces</taxon>
    </lineage>
</organism>
<name>ERG10_YEAST</name>
<protein>
    <recommendedName>
        <fullName evidence="12">Acetyl-CoA acetyltransferase</fullName>
        <ecNumber evidence="6 8">2.3.1.9</ecNumber>
    </recommendedName>
    <alternativeName>
        <fullName evidence="12">Acetoacetyl-CoA thiolase</fullName>
    </alternativeName>
    <alternativeName>
        <fullName evidence="12">Ergosterol biosynthesis protein 10</fullName>
    </alternativeName>
</protein>
<comment type="function">
    <text evidence="6 8 11">Acetyl-CoA acetyltransferase; part of the first module of ergosterol biosynthesis pathway that includes the early steps of the pathway, conserved across all eukaryotes, and which results in the formation of mevalonate from acetyl-coenzyme A (acetyl-CoA) (PubMed:5571829, PubMed:7989303). ERG10 catalyzes the formation of acetoacetyl-CoA from acetyl-CoA (PubMed:5571829, PubMed:7989303). The first module starts with the action of the cytosolic acetyl-CoA acetyltransferase ERG10 that catalyzes the formation of acetoacetyl-CoA. The hydroxymethylglutaryl-CoA synthase ERG13 then condenses acetyl-CoA with acetoacetyl-CoA to form HMG-CoA. The rate-limiting step of the early module is the reduction to mevalonate by the 3-hydroxy-3-methylglutaryl-coenzyme A (HMG-CoA) reductases HMG1 and HMG2 which are derived from a single ancestral HMGR gene by gene duplication (PubMed:32679672).</text>
</comment>
<comment type="catalytic activity">
    <reaction evidence="2 6 8">
        <text>2 acetyl-CoA = acetoacetyl-CoA + CoA</text>
        <dbReference type="Rhea" id="RHEA:21036"/>
        <dbReference type="ChEBI" id="CHEBI:57286"/>
        <dbReference type="ChEBI" id="CHEBI:57287"/>
        <dbReference type="ChEBI" id="CHEBI:57288"/>
        <dbReference type="EC" id="2.3.1.9"/>
    </reaction>
    <physiologicalReaction direction="left-to-right" evidence="6 8">
        <dbReference type="Rhea" id="RHEA:21037"/>
    </physiologicalReaction>
</comment>
<comment type="biophysicochemical properties">
    <kinetics>
        <KM evidence="6">0.16 mM for CoA</KM>
        <KM evidence="6">0.35 mM for acetoacetyl-CoA</KM>
    </kinetics>
    <phDependence>
        <text evidence="6">Optimum pH is 8.8.</text>
    </phDependence>
</comment>
<comment type="pathway">
    <text evidence="6 8">Metabolic intermediate biosynthesis; (R)-mevalonate biosynthesis; (R)-mevalonate from acetyl-CoA: step 1/3.</text>
</comment>
<comment type="subunit">
    <text evidence="5">Homotetramer.</text>
</comment>
<comment type="subcellular location">
    <subcellularLocation>
        <location evidence="7">Cytoplasm</location>
        <location evidence="7">Cytosol</location>
    </subcellularLocation>
</comment>
<comment type="induction">
    <text evidence="3 9">Induced by low intracellular sterol levels (PubMed:8754796). Also highly induced by cold conditions (PubMed:12039763).</text>
</comment>
<comment type="disruption phenotype">
    <text evidence="3">Leads to cold and freeze sensitivity.</text>
</comment>
<comment type="miscellaneous">
    <text evidence="4">Present with 60895 molecules/cell in log phase SD medium.</text>
</comment>
<comment type="similarity">
    <text evidence="13">Belongs to the thiolase-like superfamily. Thiolase family.</text>
</comment>
<feature type="initiator methionine" description="Removed" evidence="10 16">
    <location>
        <position position="1"/>
    </location>
</feature>
<feature type="chain" id="PRO_0000206416" description="Acetyl-CoA acetyltransferase">
    <location>
        <begin position="2"/>
        <end position="398"/>
    </location>
</feature>
<feature type="active site" description="Acyl-thioester intermediate" evidence="1">
    <location>
        <position position="91"/>
    </location>
</feature>
<feature type="active site" description="Proton acceptor" evidence="2">
    <location>
        <position position="354"/>
    </location>
</feature>
<feature type="active site" description="Proton acceptor" evidence="2">
    <location>
        <position position="384"/>
    </location>
</feature>
<feature type="binding site" evidence="1">
    <location>
        <position position="186"/>
    </location>
    <ligand>
        <name>CoA</name>
        <dbReference type="ChEBI" id="CHEBI:57287"/>
    </ligand>
</feature>
<feature type="binding site" evidence="1">
    <location>
        <position position="186"/>
    </location>
    <ligand>
        <name>K(+)</name>
        <dbReference type="ChEBI" id="CHEBI:29103"/>
    </ligand>
</feature>
<feature type="binding site" evidence="1">
    <location>
        <position position="231"/>
    </location>
    <ligand>
        <name>CoA</name>
        <dbReference type="ChEBI" id="CHEBI:57287"/>
    </ligand>
</feature>
<feature type="binding site" evidence="1">
    <location>
        <position position="248"/>
    </location>
    <ligand>
        <name>K(+)</name>
        <dbReference type="ChEBI" id="CHEBI:29103"/>
    </ligand>
</feature>
<feature type="binding site" evidence="1">
    <location>
        <position position="249"/>
    </location>
    <ligand>
        <name>K(+)</name>
        <dbReference type="ChEBI" id="CHEBI:29103"/>
    </ligand>
</feature>
<feature type="binding site" evidence="1">
    <location>
        <position position="251"/>
    </location>
    <ligand>
        <name>K(+)</name>
        <dbReference type="ChEBI" id="CHEBI:29103"/>
    </ligand>
</feature>
<feature type="binding site" evidence="1">
    <location>
        <position position="252"/>
    </location>
    <ligand>
        <name>CoA</name>
        <dbReference type="ChEBI" id="CHEBI:57287"/>
    </ligand>
</feature>
<feature type="binding site" evidence="1">
    <location>
        <position position="350"/>
    </location>
    <ligand>
        <name>K(+)</name>
        <dbReference type="ChEBI" id="CHEBI:29103"/>
    </ligand>
</feature>
<feature type="modified residue" description="N-acetylserine" evidence="10 16">
    <location>
        <position position="2"/>
    </location>
</feature>
<feature type="strand" evidence="17">
    <location>
        <begin position="5"/>
        <end position="12"/>
    </location>
</feature>
<feature type="turn" evidence="17">
    <location>
        <begin position="21"/>
        <end position="24"/>
    </location>
</feature>
<feature type="helix" evidence="17">
    <location>
        <begin position="27"/>
        <end position="40"/>
    </location>
</feature>
<feature type="turn" evidence="17">
    <location>
        <begin position="47"/>
        <end position="49"/>
    </location>
</feature>
<feature type="strand" evidence="17">
    <location>
        <begin position="53"/>
        <end position="57"/>
    </location>
</feature>
<feature type="helix" evidence="17">
    <location>
        <begin position="68"/>
        <end position="75"/>
    </location>
</feature>
<feature type="strand" evidence="17">
    <location>
        <begin position="83"/>
        <end position="87"/>
    </location>
</feature>
<feature type="helix" evidence="17">
    <location>
        <begin position="90"/>
        <end position="92"/>
    </location>
</feature>
<feature type="helix" evidence="17">
    <location>
        <begin position="93"/>
        <end position="106"/>
    </location>
</feature>
<feature type="strand" evidence="17">
    <location>
        <begin position="111"/>
        <end position="121"/>
    </location>
</feature>
<feature type="turn" evidence="17">
    <location>
        <begin position="129"/>
        <end position="133"/>
    </location>
</feature>
<feature type="helix" evidence="17">
    <location>
        <begin position="145"/>
        <end position="149"/>
    </location>
</feature>
<feature type="turn" evidence="17">
    <location>
        <begin position="154"/>
        <end position="156"/>
    </location>
</feature>
<feature type="helix" evidence="17">
    <location>
        <begin position="160"/>
        <end position="170"/>
    </location>
</feature>
<feature type="helix" evidence="17">
    <location>
        <begin position="175"/>
        <end position="195"/>
    </location>
</feature>
<feature type="turn" evidence="17">
    <location>
        <begin position="196"/>
        <end position="201"/>
    </location>
</feature>
<feature type="strand" evidence="17">
    <location>
        <begin position="205"/>
        <end position="207"/>
    </location>
</feature>
<feature type="strand" evidence="17">
    <location>
        <begin position="216"/>
        <end position="218"/>
    </location>
</feature>
<feature type="helix" evidence="17">
    <location>
        <begin position="224"/>
        <end position="226"/>
    </location>
</feature>
<feature type="helix" evidence="17">
    <location>
        <begin position="229"/>
        <end position="233"/>
    </location>
</feature>
<feature type="strand" evidence="17">
    <location>
        <begin position="237"/>
        <end position="239"/>
    </location>
</feature>
<feature type="strand" evidence="17">
    <location>
        <begin position="241"/>
        <end position="243"/>
    </location>
</feature>
<feature type="turn" evidence="17">
    <location>
        <begin position="248"/>
        <end position="250"/>
    </location>
</feature>
<feature type="strand" evidence="17">
    <location>
        <begin position="255"/>
        <end position="265"/>
    </location>
</feature>
<feature type="helix" evidence="17">
    <location>
        <begin position="266"/>
        <end position="271"/>
    </location>
</feature>
<feature type="strand" evidence="17">
    <location>
        <begin position="278"/>
        <end position="287"/>
    </location>
</feature>
<feature type="helix" evidence="17">
    <location>
        <begin position="290"/>
        <end position="296"/>
    </location>
</feature>
<feature type="helix" evidence="17">
    <location>
        <begin position="297"/>
        <end position="307"/>
    </location>
</feature>
<feature type="helix" evidence="17">
    <location>
        <begin position="313"/>
        <end position="315"/>
    </location>
</feature>
<feature type="strand" evidence="17">
    <location>
        <begin position="318"/>
        <end position="321"/>
    </location>
</feature>
<feature type="helix" evidence="17">
    <location>
        <begin position="326"/>
        <end position="336"/>
    </location>
</feature>
<feature type="helix" evidence="17">
    <location>
        <begin position="340"/>
        <end position="342"/>
    </location>
</feature>
<feature type="helix" evidence="17">
    <location>
        <begin position="349"/>
        <end position="352"/>
    </location>
</feature>
<feature type="helix" evidence="17">
    <location>
        <begin position="356"/>
        <end position="374"/>
    </location>
</feature>
<feature type="strand" evidence="17">
    <location>
        <begin position="378"/>
        <end position="385"/>
    </location>
</feature>
<feature type="turn" evidence="17">
    <location>
        <begin position="386"/>
        <end position="388"/>
    </location>
</feature>
<feature type="strand" evidence="17">
    <location>
        <begin position="389"/>
        <end position="397"/>
    </location>
</feature>
<keyword id="KW-0002">3D-structure</keyword>
<keyword id="KW-0007">Acetylation</keyword>
<keyword id="KW-0012">Acyltransferase</keyword>
<keyword id="KW-0963">Cytoplasm</keyword>
<keyword id="KW-0903">Direct protein sequencing</keyword>
<keyword id="KW-0479">Metal-binding</keyword>
<keyword id="KW-0630">Potassium</keyword>
<keyword id="KW-1185">Reference proteome</keyword>
<keyword id="KW-0808">Transferase</keyword>
<sequence>MSQNVYIVSTARTPIGSFQGSLSSKTAVELGAVALKGALAKVPELDASKDFDEIIFGNVLSANLGQAPARQVALAAGLSNHIVASTVNKVCASAMKAIILGAQSIKCGNADVVVAGGCESMTNAPYYMPAARAGAKFGQTVLVDGVERDGLNDAYDGLAMGVHAEKCARDWDITREQQDNFAIESYQKSQKSQKEGKFDNEIVPVTIKGFRGKPDTQVTKDEEPARLHVEKLRSARTVFQKENGTVTAANASPINDGAAAVILVSEKVLKEKNLKPLAIIKGWGEAAHQPADFTWAPSLAVPKALKHAGIEDINSVDYFEFNEAFSVVGLVNTKILKLDPSKVNVYGGAVALGHPLGCSGARVVVTLLSILQQEGGKIGVAAICNGGGGASSIVIEKI</sequence>
<proteinExistence type="evidence at protein level"/>
<accession>P41338</accession>
<accession>D6W3Y5</accession>